<name>MUTL_SHEDO</name>
<feature type="chain" id="PRO_1000076711" description="DNA mismatch repair protein MutL">
    <location>
        <begin position="1"/>
        <end position="665"/>
    </location>
</feature>
<feature type="region of interest" description="Disordered" evidence="2">
    <location>
        <begin position="348"/>
        <end position="370"/>
    </location>
</feature>
<feature type="region of interest" description="Disordered" evidence="2">
    <location>
        <begin position="385"/>
        <end position="445"/>
    </location>
</feature>
<feature type="compositionally biased region" description="Polar residues" evidence="2">
    <location>
        <begin position="348"/>
        <end position="361"/>
    </location>
</feature>
<feature type="compositionally biased region" description="Polar residues" evidence="2">
    <location>
        <begin position="407"/>
        <end position="421"/>
    </location>
</feature>
<feature type="compositionally biased region" description="Low complexity" evidence="2">
    <location>
        <begin position="426"/>
        <end position="445"/>
    </location>
</feature>
<gene>
    <name evidence="1" type="primary">mutL</name>
    <name type="ordered locus">Sden_3207</name>
</gene>
<protein>
    <recommendedName>
        <fullName evidence="1">DNA mismatch repair protein MutL</fullName>
    </recommendedName>
</protein>
<reference key="1">
    <citation type="submission" date="2006-03" db="EMBL/GenBank/DDBJ databases">
        <title>Complete sequence of Shewanella denitrificans OS217.</title>
        <authorList>
            <consortium name="US DOE Joint Genome Institute"/>
            <person name="Copeland A."/>
            <person name="Lucas S."/>
            <person name="Lapidus A."/>
            <person name="Barry K."/>
            <person name="Detter J.C."/>
            <person name="Glavina del Rio T."/>
            <person name="Hammon N."/>
            <person name="Israni S."/>
            <person name="Dalin E."/>
            <person name="Tice H."/>
            <person name="Pitluck S."/>
            <person name="Brettin T."/>
            <person name="Bruce D."/>
            <person name="Han C."/>
            <person name="Tapia R."/>
            <person name="Gilna P."/>
            <person name="Kiss H."/>
            <person name="Schmutz J."/>
            <person name="Larimer F."/>
            <person name="Land M."/>
            <person name="Hauser L."/>
            <person name="Kyrpides N."/>
            <person name="Lykidis A."/>
            <person name="Richardson P."/>
        </authorList>
    </citation>
    <scope>NUCLEOTIDE SEQUENCE [LARGE SCALE GENOMIC DNA]</scope>
    <source>
        <strain>OS217 / ATCC BAA-1090 / DSM 15013</strain>
    </source>
</reference>
<accession>Q12J93</accession>
<keyword id="KW-0227">DNA damage</keyword>
<keyword id="KW-0234">DNA repair</keyword>
<keyword id="KW-1185">Reference proteome</keyword>
<organism>
    <name type="scientific">Shewanella denitrificans (strain OS217 / ATCC BAA-1090 / DSM 15013)</name>
    <dbReference type="NCBI Taxonomy" id="318161"/>
    <lineage>
        <taxon>Bacteria</taxon>
        <taxon>Pseudomonadati</taxon>
        <taxon>Pseudomonadota</taxon>
        <taxon>Gammaproteobacteria</taxon>
        <taxon>Alteromonadales</taxon>
        <taxon>Shewanellaceae</taxon>
        <taxon>Shewanella</taxon>
    </lineage>
</organism>
<dbReference type="EMBL" id="CP000302">
    <property type="protein sequence ID" value="ABE56483.1"/>
    <property type="molecule type" value="Genomic_DNA"/>
</dbReference>
<dbReference type="RefSeq" id="WP_011497628.1">
    <property type="nucleotide sequence ID" value="NC_007954.1"/>
</dbReference>
<dbReference type="SMR" id="Q12J93"/>
<dbReference type="STRING" id="318161.Sden_3207"/>
<dbReference type="KEGG" id="sdn:Sden_3207"/>
<dbReference type="eggNOG" id="COG0323">
    <property type="taxonomic scope" value="Bacteria"/>
</dbReference>
<dbReference type="HOGENOM" id="CLU_004131_5_1_6"/>
<dbReference type="OrthoDB" id="9763467at2"/>
<dbReference type="Proteomes" id="UP000001982">
    <property type="component" value="Chromosome"/>
</dbReference>
<dbReference type="GO" id="GO:0032300">
    <property type="term" value="C:mismatch repair complex"/>
    <property type="evidence" value="ECO:0007669"/>
    <property type="project" value="InterPro"/>
</dbReference>
<dbReference type="GO" id="GO:0005524">
    <property type="term" value="F:ATP binding"/>
    <property type="evidence" value="ECO:0007669"/>
    <property type="project" value="InterPro"/>
</dbReference>
<dbReference type="GO" id="GO:0016887">
    <property type="term" value="F:ATP hydrolysis activity"/>
    <property type="evidence" value="ECO:0007669"/>
    <property type="project" value="InterPro"/>
</dbReference>
<dbReference type="GO" id="GO:0140664">
    <property type="term" value="F:ATP-dependent DNA damage sensor activity"/>
    <property type="evidence" value="ECO:0007669"/>
    <property type="project" value="InterPro"/>
</dbReference>
<dbReference type="GO" id="GO:0030983">
    <property type="term" value="F:mismatched DNA binding"/>
    <property type="evidence" value="ECO:0007669"/>
    <property type="project" value="InterPro"/>
</dbReference>
<dbReference type="GO" id="GO:0006298">
    <property type="term" value="P:mismatch repair"/>
    <property type="evidence" value="ECO:0007669"/>
    <property type="project" value="UniProtKB-UniRule"/>
</dbReference>
<dbReference type="CDD" id="cd16926">
    <property type="entry name" value="HATPase_MutL-MLH-PMS-like"/>
    <property type="match status" value="1"/>
</dbReference>
<dbReference type="CDD" id="cd03482">
    <property type="entry name" value="MutL_Trans_MutL"/>
    <property type="match status" value="1"/>
</dbReference>
<dbReference type="FunFam" id="3.30.565.10:FF:000003">
    <property type="entry name" value="DNA mismatch repair endonuclease MutL"/>
    <property type="match status" value="1"/>
</dbReference>
<dbReference type="Gene3D" id="3.30.230.10">
    <property type="match status" value="1"/>
</dbReference>
<dbReference type="Gene3D" id="3.30.565.10">
    <property type="entry name" value="Histidine kinase-like ATPase, C-terminal domain"/>
    <property type="match status" value="1"/>
</dbReference>
<dbReference type="Gene3D" id="3.30.1540.20">
    <property type="entry name" value="MutL, C-terminal domain, dimerisation subdomain"/>
    <property type="match status" value="1"/>
</dbReference>
<dbReference type="Gene3D" id="3.30.1370.100">
    <property type="entry name" value="MutL, C-terminal domain, regulatory subdomain"/>
    <property type="match status" value="1"/>
</dbReference>
<dbReference type="HAMAP" id="MF_00149">
    <property type="entry name" value="DNA_mis_repair"/>
    <property type="match status" value="1"/>
</dbReference>
<dbReference type="InterPro" id="IPR014762">
    <property type="entry name" value="DNA_mismatch_repair_CS"/>
</dbReference>
<dbReference type="InterPro" id="IPR020667">
    <property type="entry name" value="DNA_mismatch_repair_MutL"/>
</dbReference>
<dbReference type="InterPro" id="IPR013507">
    <property type="entry name" value="DNA_mismatch_S5_2-like"/>
</dbReference>
<dbReference type="InterPro" id="IPR036890">
    <property type="entry name" value="HATPase_C_sf"/>
</dbReference>
<dbReference type="InterPro" id="IPR002099">
    <property type="entry name" value="MutL/Mlh/PMS"/>
</dbReference>
<dbReference type="InterPro" id="IPR038973">
    <property type="entry name" value="MutL/Mlh/Pms-like"/>
</dbReference>
<dbReference type="InterPro" id="IPR014790">
    <property type="entry name" value="MutL_C"/>
</dbReference>
<dbReference type="InterPro" id="IPR042120">
    <property type="entry name" value="MutL_C_dimsub"/>
</dbReference>
<dbReference type="InterPro" id="IPR042121">
    <property type="entry name" value="MutL_C_regsub"/>
</dbReference>
<dbReference type="InterPro" id="IPR037198">
    <property type="entry name" value="MutL_C_sf"/>
</dbReference>
<dbReference type="InterPro" id="IPR020568">
    <property type="entry name" value="Ribosomal_Su5_D2-typ_SF"/>
</dbReference>
<dbReference type="InterPro" id="IPR014721">
    <property type="entry name" value="Ribsml_uS5_D2-typ_fold_subgr"/>
</dbReference>
<dbReference type="NCBIfam" id="TIGR00585">
    <property type="entry name" value="mutl"/>
    <property type="match status" value="1"/>
</dbReference>
<dbReference type="NCBIfam" id="NF000948">
    <property type="entry name" value="PRK00095.1-1"/>
    <property type="match status" value="1"/>
</dbReference>
<dbReference type="PANTHER" id="PTHR10073">
    <property type="entry name" value="DNA MISMATCH REPAIR PROTEIN MLH, PMS, MUTL"/>
    <property type="match status" value="1"/>
</dbReference>
<dbReference type="PANTHER" id="PTHR10073:SF12">
    <property type="entry name" value="DNA MISMATCH REPAIR PROTEIN MLH1"/>
    <property type="match status" value="1"/>
</dbReference>
<dbReference type="Pfam" id="PF01119">
    <property type="entry name" value="DNA_mis_repair"/>
    <property type="match status" value="1"/>
</dbReference>
<dbReference type="Pfam" id="PF13589">
    <property type="entry name" value="HATPase_c_3"/>
    <property type="match status" value="1"/>
</dbReference>
<dbReference type="Pfam" id="PF08676">
    <property type="entry name" value="MutL_C"/>
    <property type="match status" value="1"/>
</dbReference>
<dbReference type="SMART" id="SM01340">
    <property type="entry name" value="DNA_mis_repair"/>
    <property type="match status" value="1"/>
</dbReference>
<dbReference type="SMART" id="SM00853">
    <property type="entry name" value="MutL_C"/>
    <property type="match status" value="1"/>
</dbReference>
<dbReference type="SUPFAM" id="SSF55874">
    <property type="entry name" value="ATPase domain of HSP90 chaperone/DNA topoisomerase II/histidine kinase"/>
    <property type="match status" value="1"/>
</dbReference>
<dbReference type="SUPFAM" id="SSF118116">
    <property type="entry name" value="DNA mismatch repair protein MutL"/>
    <property type="match status" value="1"/>
</dbReference>
<dbReference type="SUPFAM" id="SSF54211">
    <property type="entry name" value="Ribosomal protein S5 domain 2-like"/>
    <property type="match status" value="1"/>
</dbReference>
<dbReference type="PROSITE" id="PS00058">
    <property type="entry name" value="DNA_MISMATCH_REPAIR_1"/>
    <property type="match status" value="1"/>
</dbReference>
<sequence>MPIHILPPQLANQIAAGEVVERPASVVKELVENSLDAGATRVDIDIDKGGSKLIRIRDNGSGIPKDELALALSRHATSKVHSLDDLEAILSFGFRGEALASISSVARLTLTSKTAEQTEAWQAHAEGSQMDVSLMPAAHPQGSTIEVVDLFFNTPARRRFLKSDKTEFTHIDEWLKRIAIVRTDIHFSLTHNGKLVRQYRAANTDIQMQQRLSQICGRAFAEQAITLACEHDGLSLEGYIQSPHDNSVTDTNYFYVNGRLVRDKLVNHAVRQAFAEHQWHQQPSYVLKLTLDPHQVDVNVHPAKHEVRFHQSRYVHDFILQALQSALAQFPAKGSQAEYDFEQDNGSLEATAASNPDNGLSPSRGHAEEGDFSNSVAYAANAASVHRGSTSSERKASAGVSQFGRIPSSQGDYQPQDNSRYTPKRYSTNAASTNTASNYSHSTSAPVSRQALEGYAQLLATPEIVSSSNQYVADKNQEFKDVNESGSTPKVAAMPAVLAGQYWVITQGECLRLLPLQAVRLWLRQKEISHKLPTGLVSQPLLMPVAVKADKHWGEILLERESLLRQLGLELTIRYQQLIIKKVPPYLRESQLAVLIPELLQWVEHQVPAIPALSAWLAKHGQKHEQSLTDTWEGFCLLSEPEQQVLLEKAKVLPWQAWLEESQSE</sequence>
<proteinExistence type="inferred from homology"/>
<comment type="function">
    <text evidence="1">This protein is involved in the repair of mismatches in DNA. It is required for dam-dependent methyl-directed DNA mismatch repair. May act as a 'molecular matchmaker', a protein that promotes the formation of a stable complex between two or more DNA-binding proteins in an ATP-dependent manner without itself being part of a final effector complex.</text>
</comment>
<comment type="similarity">
    <text evidence="1">Belongs to the DNA mismatch repair MutL/HexB family.</text>
</comment>
<evidence type="ECO:0000255" key="1">
    <source>
        <dbReference type="HAMAP-Rule" id="MF_00149"/>
    </source>
</evidence>
<evidence type="ECO:0000256" key="2">
    <source>
        <dbReference type="SAM" id="MobiDB-lite"/>
    </source>
</evidence>